<feature type="chain" id="PRO_0000192781" description="DNA endonuclease I-CeuI">
    <location>
        <begin position="1"/>
        <end position="218"/>
    </location>
</feature>
<feature type="region of interest" description="Interaction with DNA">
    <location>
        <begin position="71"/>
        <end position="75"/>
    </location>
</feature>
<feature type="region of interest" description="Interaction with DNA">
    <location>
        <begin position="90"/>
        <end position="94"/>
    </location>
</feature>
<feature type="region of interest" description="Interaction with DNA">
    <location>
        <begin position="114"/>
        <end position="116"/>
    </location>
</feature>
<feature type="region of interest" description="Interaction with DNA">
    <location>
        <begin position="191"/>
        <end position="199"/>
    </location>
</feature>
<feature type="binding site">
    <location>
        <position position="65"/>
    </location>
    <ligand>
        <name>Mg(2+)</name>
        <dbReference type="ChEBI" id="CHEBI:18420"/>
        <label>1</label>
    </ligand>
</feature>
<feature type="binding site">
    <location>
        <position position="66"/>
    </location>
    <ligand>
        <name>Mg(2+)</name>
        <dbReference type="ChEBI" id="CHEBI:18420"/>
        <label>1</label>
    </ligand>
</feature>
<feature type="binding site">
    <location>
        <position position="86"/>
    </location>
    <ligand>
        <name>Mg(2+)</name>
        <dbReference type="ChEBI" id="CHEBI:18420"/>
        <label>2</label>
    </ligand>
</feature>
<feature type="site" description="Interaction with DNA">
    <location>
        <position position="21"/>
    </location>
</feature>
<feature type="site" description="Interaction with DNA">
    <location>
        <position position="80"/>
    </location>
</feature>
<feature type="site" description="Interaction with DNA">
    <location>
        <position position="130"/>
    </location>
</feature>
<feature type="site" description="Interaction with DNA">
    <location>
        <position position="172"/>
    </location>
</feature>
<feature type="mutagenesis site" description="Impaired DNA cleavage activity." evidence="2">
    <original>Q</original>
    <variation>R</variation>
    <location>
        <position position="93"/>
    </location>
</feature>
<feature type="helix" evidence="4">
    <location>
        <begin position="14"/>
        <end position="30"/>
    </location>
</feature>
<feature type="helix" evidence="4">
    <location>
        <begin position="33"/>
        <end position="44"/>
    </location>
</feature>
<feature type="helix" evidence="4">
    <location>
        <begin position="53"/>
        <end position="66"/>
    </location>
</feature>
<feature type="strand" evidence="4">
    <location>
        <begin position="67"/>
        <end position="75"/>
    </location>
</feature>
<feature type="strand" evidence="4">
    <location>
        <begin position="82"/>
        <end position="94"/>
    </location>
</feature>
<feature type="helix" evidence="4">
    <location>
        <begin position="95"/>
        <end position="97"/>
    </location>
</feature>
<feature type="helix" evidence="4">
    <location>
        <begin position="98"/>
        <end position="108"/>
    </location>
</feature>
<feature type="strand" evidence="4">
    <location>
        <begin position="112"/>
        <end position="115"/>
    </location>
</feature>
<feature type="strand" evidence="4">
    <location>
        <begin position="119"/>
        <end position="127"/>
    </location>
</feature>
<feature type="helix" evidence="4">
    <location>
        <begin position="130"/>
        <end position="135"/>
    </location>
</feature>
<feature type="helix" evidence="4">
    <location>
        <begin position="137"/>
        <end position="144"/>
    </location>
</feature>
<feature type="turn" evidence="4">
    <location>
        <begin position="145"/>
        <end position="148"/>
    </location>
</feature>
<feature type="helix" evidence="4">
    <location>
        <begin position="151"/>
        <end position="168"/>
    </location>
</feature>
<feature type="helix" evidence="4">
    <location>
        <begin position="171"/>
        <end position="173"/>
    </location>
</feature>
<feature type="helix" evidence="4">
    <location>
        <begin position="175"/>
        <end position="180"/>
    </location>
</feature>
<feature type="helix" evidence="4">
    <location>
        <begin position="182"/>
        <end position="189"/>
    </location>
</feature>
<feature type="helix" evidence="4">
    <location>
        <begin position="203"/>
        <end position="210"/>
    </location>
</feature>
<comment type="function">
    <text>Endonuclease involved in intron homing. Recognizes a degenerate sequence of 17-19 bp to produce a staggered cut 5 bp downstream from the CeLSU.5 intron insertion site.</text>
</comment>
<comment type="cofactor">
    <cofactor evidence="1">
        <name>Mg(2+)</name>
        <dbReference type="ChEBI" id="CHEBI:18420"/>
    </cofactor>
    <text evidence="1">Binds 2 magnesium ions per subunit. A third magnesium ion may be bound between subunits.</text>
</comment>
<comment type="subunit">
    <text evidence="2">Homodimer.</text>
</comment>
<comment type="subcellular location">
    <subcellularLocation>
        <location>Plastid</location>
        <location>Chloroplast</location>
    </subcellularLocation>
</comment>
<comment type="similarity">
    <text evidence="3">Belongs to the LAGLIDADG endonuclease family.</text>
</comment>
<reference key="1">
    <citation type="journal article" date="1991" name="Curr. Genet.">
        <title>A group I intron in the chloroplast large subunit rRNA gene of Chlamydomonas eugametos encodes a double-strand endonuclease that cleaves the homing site of this intron.</title>
        <authorList>
            <person name="Gauthier A."/>
            <person name="Turmel M."/>
            <person name="Lemieux C."/>
        </authorList>
    </citation>
    <scope>NUCLEOTIDE SEQUENCE [GENOMIC DNA]</scope>
</reference>
<reference key="2">
    <citation type="journal article" date="1991" name="J. Mol. Biol.">
        <title>Six group I introns and three internal transcribed spacers in the chloroplast large subunit ribosomal RNA gene of the green alga Chlamydomonas eugametos.</title>
        <authorList>
            <person name="Turmel M."/>
            <person name="Boulanger J."/>
            <person name="Schnare M.N."/>
            <person name="Gray M.W."/>
            <person name="Lemieux C."/>
        </authorList>
    </citation>
    <scope>NUCLEOTIDE SEQUENCE [GENOMIC DNA]</scope>
</reference>
<reference key="3">
    <citation type="journal article" date="1997" name="Nucleic Acids Res.">
        <title>Evolutionarily conserved and functionally important residues in the I-CeuI homing endonuclease.</title>
        <authorList>
            <person name="Turmel M."/>
            <person name="Otis C."/>
            <person name="Cote V."/>
            <person name="Lemieux C."/>
        </authorList>
    </citation>
    <scope>CHARACTERIZATION</scope>
</reference>
<reference key="4">
    <citation type="journal article" date="2006" name="Structure">
        <title>The structure of I-CeuI homing endonuclease: evolving asymmetric DNA recognition from a symmetric protein scaffold.</title>
        <authorList>
            <person name="Spiegel P.C."/>
            <person name="Chevalier B."/>
            <person name="Sussman D."/>
            <person name="Turmel M."/>
            <person name="Lemieux C."/>
            <person name="Stoddard B.L."/>
        </authorList>
    </citation>
    <scope>X-RAY CRYSTALLOGRAPHY (2.2 ANGSTROMS) OF 5-211 IN COMPLEX WITH DNA AND CALCIUM IONS</scope>
    <scope>MUTAGENESIS OF GLN-93</scope>
    <scope>SUBUNIT</scope>
</reference>
<name>DNE1_CHLMO</name>
<keyword id="KW-0002">3D-structure</keyword>
<keyword id="KW-0150">Chloroplast</keyword>
<keyword id="KW-0238">DNA-binding</keyword>
<keyword id="KW-0255">Endonuclease</keyword>
<keyword id="KW-0378">Hydrolase</keyword>
<keyword id="KW-0404">Intron homing</keyword>
<keyword id="KW-0460">Magnesium</keyword>
<keyword id="KW-0479">Metal-binding</keyword>
<keyword id="KW-0540">Nuclease</keyword>
<keyword id="KW-0934">Plastid</keyword>
<sequence>MSNFILKPGEKLPQDKLEELKKINDAVKKTKNFSKYLIDLRKLFQIDEVQVTSESKLFLAGFLEGEASLNISTKKLATSKFGLVVDPEFNVTQHVNGVKVLYLALEVFKTGRIRHKSGSNATLVLTIDNRQSLEEKVIPFYEQYVVAFSSPEKVKRVANFKALLELFNNDAHQDLEQLVNKILPIWDQMRKQQGQSNEGFPNLEAAQDFARNYKKGIK</sequence>
<dbReference type="EC" id="3.1.-.-"/>
<dbReference type="EMBL" id="Z17234">
    <property type="protein sequence ID" value="CAA78934.1"/>
    <property type="molecule type" value="Genomic_DNA"/>
</dbReference>
<dbReference type="PIR" id="S14133">
    <property type="entry name" value="S14133"/>
</dbReference>
<dbReference type="PDB" id="2EX5">
    <property type="method" value="X-ray"/>
    <property type="resolution" value="2.20 A"/>
    <property type="chains" value="A/B=5-211"/>
</dbReference>
<dbReference type="PDBsum" id="2EX5"/>
<dbReference type="SMR" id="P32761"/>
<dbReference type="DIP" id="DIP-29110N"/>
<dbReference type="REBASE" id="2614">
    <property type="entry name" value="I-CeuI"/>
</dbReference>
<dbReference type="EvolutionaryTrace" id="P32761"/>
<dbReference type="GO" id="GO:0009507">
    <property type="term" value="C:chloroplast"/>
    <property type="evidence" value="ECO:0007669"/>
    <property type="project" value="UniProtKB-SubCell"/>
</dbReference>
<dbReference type="GO" id="GO:0005739">
    <property type="term" value="C:mitochondrion"/>
    <property type="evidence" value="ECO:0007669"/>
    <property type="project" value="UniProtKB-ARBA"/>
</dbReference>
<dbReference type="GO" id="GO:0003677">
    <property type="term" value="F:DNA binding"/>
    <property type="evidence" value="ECO:0007669"/>
    <property type="project" value="UniProtKB-KW"/>
</dbReference>
<dbReference type="GO" id="GO:0004519">
    <property type="term" value="F:endonuclease activity"/>
    <property type="evidence" value="ECO:0007669"/>
    <property type="project" value="UniProtKB-KW"/>
</dbReference>
<dbReference type="GO" id="GO:0046872">
    <property type="term" value="F:metal ion binding"/>
    <property type="evidence" value="ECO:0007669"/>
    <property type="project" value="UniProtKB-KW"/>
</dbReference>
<dbReference type="GO" id="GO:0006314">
    <property type="term" value="P:intron homing"/>
    <property type="evidence" value="ECO:0007669"/>
    <property type="project" value="UniProtKB-KW"/>
</dbReference>
<dbReference type="Gene3D" id="3.10.28.10">
    <property type="entry name" value="Homing endonucleases"/>
    <property type="match status" value="1"/>
</dbReference>
<dbReference type="InterPro" id="IPR027434">
    <property type="entry name" value="Homing_endonucl"/>
</dbReference>
<dbReference type="InterPro" id="IPR004860">
    <property type="entry name" value="LAGLIDADG_dom"/>
</dbReference>
<dbReference type="InterPro" id="IPR051289">
    <property type="entry name" value="LAGLIDADG_Endonuclease"/>
</dbReference>
<dbReference type="PANTHER" id="PTHR36181">
    <property type="entry name" value="INTRON-ENCODED ENDONUCLEASE AI3-RELATED"/>
    <property type="match status" value="1"/>
</dbReference>
<dbReference type="PANTHER" id="PTHR36181:SF4">
    <property type="entry name" value="LAGLIDADG ENDONUCLEASE"/>
    <property type="match status" value="1"/>
</dbReference>
<dbReference type="Pfam" id="PF00961">
    <property type="entry name" value="LAGLIDADG_1"/>
    <property type="match status" value="1"/>
</dbReference>
<dbReference type="SUPFAM" id="SSF55608">
    <property type="entry name" value="Homing endonucleases"/>
    <property type="match status" value="1"/>
</dbReference>
<organism>
    <name type="scientific">Chlamydomonas moewusii</name>
    <name type="common">Chlamydomonas eugametos</name>
    <dbReference type="NCBI Taxonomy" id="3054"/>
    <lineage>
        <taxon>Eukaryota</taxon>
        <taxon>Viridiplantae</taxon>
        <taxon>Chlorophyta</taxon>
        <taxon>core chlorophytes</taxon>
        <taxon>Chlorophyceae</taxon>
        <taxon>CS clade</taxon>
        <taxon>Chlamydomonadales</taxon>
        <taxon>Chlamydomonadaceae</taxon>
        <taxon>Chlamydomonas</taxon>
    </lineage>
</organism>
<geneLocation type="chloroplast"/>
<accession>P32761</accession>
<proteinExistence type="evidence at protein level"/>
<evidence type="ECO:0000250" key="1"/>
<evidence type="ECO:0000269" key="2">
    <source>
    </source>
</evidence>
<evidence type="ECO:0000305" key="3"/>
<evidence type="ECO:0007829" key="4">
    <source>
        <dbReference type="PDB" id="2EX5"/>
    </source>
</evidence>
<protein>
    <recommendedName>
        <fullName>DNA endonuclease I-CeuI</fullName>
        <ecNumber>3.1.-.-</ecNumber>
    </recommendedName>
    <alternativeName>
        <fullName>23S rRNA intron 1 protein</fullName>
    </alternativeName>
</protein>